<protein>
    <recommendedName>
        <fullName evidence="1">Uronate isomerase</fullName>
        <ecNumber evidence="1">5.3.1.12</ecNumber>
    </recommendedName>
    <alternativeName>
        <fullName evidence="1">Glucuronate isomerase</fullName>
    </alternativeName>
    <alternativeName>
        <fullName evidence="1">Uronic isomerase</fullName>
    </alternativeName>
</protein>
<accession>Q65V59</accession>
<comment type="catalytic activity">
    <reaction evidence="1">
        <text>D-glucuronate = D-fructuronate</text>
        <dbReference type="Rhea" id="RHEA:13049"/>
        <dbReference type="ChEBI" id="CHEBI:58720"/>
        <dbReference type="ChEBI" id="CHEBI:59863"/>
        <dbReference type="EC" id="5.3.1.12"/>
    </reaction>
</comment>
<comment type="catalytic activity">
    <reaction evidence="1">
        <text>aldehydo-D-galacturonate = keto-D-tagaturonate</text>
        <dbReference type="Rhea" id="RHEA:27702"/>
        <dbReference type="ChEBI" id="CHEBI:12952"/>
        <dbReference type="ChEBI" id="CHEBI:17886"/>
        <dbReference type="EC" id="5.3.1.12"/>
    </reaction>
</comment>
<comment type="pathway">
    <text evidence="1">Carbohydrate metabolism; pentose and glucuronate interconversion.</text>
</comment>
<comment type="similarity">
    <text evidence="1">Belongs to the metallo-dependent hydrolases superfamily. Uronate isomerase family.</text>
</comment>
<comment type="sequence caution" evidence="2">
    <conflict type="erroneous initiation">
        <sequence resource="EMBL-CDS" id="AAU37151"/>
    </conflict>
</comment>
<proteinExistence type="inferred from homology"/>
<feature type="chain" id="PRO_0000172776" description="Uronate isomerase">
    <location>
        <begin position="1"/>
        <end position="467"/>
    </location>
</feature>
<dbReference type="EC" id="5.3.1.12" evidence="1"/>
<dbReference type="EMBL" id="AE016827">
    <property type="protein sequence ID" value="AAU37151.1"/>
    <property type="status" value="ALT_INIT"/>
    <property type="molecule type" value="Genomic_DNA"/>
</dbReference>
<dbReference type="RefSeq" id="WP_011199723.1">
    <property type="nucleotide sequence ID" value="NC_006300.1"/>
</dbReference>
<dbReference type="SMR" id="Q65V59"/>
<dbReference type="STRING" id="221988.MS0544"/>
<dbReference type="KEGG" id="msu:MS0544"/>
<dbReference type="eggNOG" id="COG1904">
    <property type="taxonomic scope" value="Bacteria"/>
</dbReference>
<dbReference type="HOGENOM" id="CLU_044465_1_0_6"/>
<dbReference type="OrthoDB" id="9766564at2"/>
<dbReference type="UniPathway" id="UPA00246"/>
<dbReference type="Proteomes" id="UP000000607">
    <property type="component" value="Chromosome"/>
</dbReference>
<dbReference type="GO" id="GO:0008880">
    <property type="term" value="F:glucuronate isomerase activity"/>
    <property type="evidence" value="ECO:0007669"/>
    <property type="project" value="UniProtKB-UniRule"/>
</dbReference>
<dbReference type="GO" id="GO:0019698">
    <property type="term" value="P:D-galacturonate catabolic process"/>
    <property type="evidence" value="ECO:0007669"/>
    <property type="project" value="TreeGrafter"/>
</dbReference>
<dbReference type="GO" id="GO:0042840">
    <property type="term" value="P:D-glucuronate catabolic process"/>
    <property type="evidence" value="ECO:0007669"/>
    <property type="project" value="TreeGrafter"/>
</dbReference>
<dbReference type="Gene3D" id="3.20.20.140">
    <property type="entry name" value="Metal-dependent hydrolases"/>
    <property type="match status" value="1"/>
</dbReference>
<dbReference type="Gene3D" id="1.10.2020.10">
    <property type="entry name" value="uronate isomerase, domain 2, chain A"/>
    <property type="match status" value="1"/>
</dbReference>
<dbReference type="HAMAP" id="MF_00675">
    <property type="entry name" value="UxaC"/>
    <property type="match status" value="1"/>
</dbReference>
<dbReference type="InterPro" id="IPR032466">
    <property type="entry name" value="Metal_Hydrolase"/>
</dbReference>
<dbReference type="InterPro" id="IPR003766">
    <property type="entry name" value="Uronate_isomerase"/>
</dbReference>
<dbReference type="NCBIfam" id="NF002794">
    <property type="entry name" value="PRK02925.1"/>
    <property type="match status" value="1"/>
</dbReference>
<dbReference type="PANTHER" id="PTHR30068">
    <property type="entry name" value="URONATE ISOMERASE"/>
    <property type="match status" value="1"/>
</dbReference>
<dbReference type="PANTHER" id="PTHR30068:SF4">
    <property type="entry name" value="URONATE ISOMERASE"/>
    <property type="match status" value="1"/>
</dbReference>
<dbReference type="Pfam" id="PF02614">
    <property type="entry name" value="UxaC"/>
    <property type="match status" value="1"/>
</dbReference>
<dbReference type="SUPFAM" id="SSF51556">
    <property type="entry name" value="Metallo-dependent hydrolases"/>
    <property type="match status" value="1"/>
</dbReference>
<reference key="1">
    <citation type="journal article" date="2004" name="Nat. Biotechnol.">
        <title>The genome sequence of the capnophilic rumen bacterium Mannheimia succiniciproducens.</title>
        <authorList>
            <person name="Hong S.H."/>
            <person name="Kim J.S."/>
            <person name="Lee S.Y."/>
            <person name="In Y.H."/>
            <person name="Choi S.S."/>
            <person name="Rih J.-K."/>
            <person name="Kim C.H."/>
            <person name="Jeong H."/>
            <person name="Hur C.G."/>
            <person name="Kim J.J."/>
        </authorList>
    </citation>
    <scope>NUCLEOTIDE SEQUENCE [LARGE SCALE GENOMIC DNA]</scope>
    <source>
        <strain>KCTC 0769BP / MBEL55E</strain>
    </source>
</reference>
<name>UXAC_MANSM</name>
<evidence type="ECO:0000255" key="1">
    <source>
        <dbReference type="HAMAP-Rule" id="MF_00675"/>
    </source>
</evidence>
<evidence type="ECO:0000305" key="2"/>
<organism>
    <name type="scientific">Mannheimia succiniciproducens (strain KCTC 0769BP / MBEL55E)</name>
    <dbReference type="NCBI Taxonomy" id="221988"/>
    <lineage>
        <taxon>Bacteria</taxon>
        <taxon>Pseudomonadati</taxon>
        <taxon>Pseudomonadota</taxon>
        <taxon>Gammaproteobacteria</taxon>
        <taxon>Pasteurellales</taxon>
        <taxon>Pasteurellaceae</taxon>
        <taxon>Basfia</taxon>
    </lineage>
</organism>
<gene>
    <name evidence="1" type="primary">uxaC</name>
    <name type="ordered locus">MS0544</name>
</gene>
<keyword id="KW-0413">Isomerase</keyword>
<sequence length="467" mass="54249">MKQFMDEDFLLSNDVARTLYYDYAKDQPIFDYHCHLPPKEIAENRQFKDLTEIWLAGDHYKWRAMRSAGVDENLITGNASNYEKYQAWAKTVPLCIGNPIYHWTHLELRRPFGITNTLFNPQSADKIWQECNELLQQPEFSARGIMRQMNVKFSGTTDDPIDSLEYHKAIAEDRDFDIEVAPSWRPDKAVKIELPQFNDYIKQLEQVSDTEINGFDSLKKALSKRLDHFDKRGCKSADQGMEIVRFAPVPDEKELDRILQLRRNEQPLTELQISQFSTALLVWLGAEYCKRNWVMQMHIGALRNNNTRMFKLLGADSGFDSIADRTFAEQLSRLLDAMDQNNQLPKTILYCLNPRDNEMIATMIGNFQTGGIAGKIQFGSGWWFNDQKDGMERQLQQLSQLGLLSQFVGMLTDSRSFLSYTRHEYFRRILCEMIGRWVVNGEAPNDMNLLGNMVKNICFDNAKAYFK</sequence>